<name>FABZ_PSET1</name>
<organism>
    <name type="scientific">Pseudoalteromonas translucida (strain TAC 125)</name>
    <dbReference type="NCBI Taxonomy" id="326442"/>
    <lineage>
        <taxon>Bacteria</taxon>
        <taxon>Pseudomonadati</taxon>
        <taxon>Pseudomonadota</taxon>
        <taxon>Gammaproteobacteria</taxon>
        <taxon>Alteromonadales</taxon>
        <taxon>Pseudoalteromonadaceae</taxon>
        <taxon>Pseudoalteromonas</taxon>
    </lineage>
</organism>
<dbReference type="EC" id="4.2.1.59" evidence="1"/>
<dbReference type="EMBL" id="CR954246">
    <property type="protein sequence ID" value="CAI87081.1"/>
    <property type="molecule type" value="Genomic_DNA"/>
</dbReference>
<dbReference type="SMR" id="Q3IIY5"/>
<dbReference type="STRING" id="326442.PSHAa2025"/>
<dbReference type="KEGG" id="pha:PSHAa2025"/>
<dbReference type="PATRIC" id="fig|326442.8.peg.1953"/>
<dbReference type="eggNOG" id="COG0764">
    <property type="taxonomic scope" value="Bacteria"/>
</dbReference>
<dbReference type="HOGENOM" id="CLU_078912_1_0_6"/>
<dbReference type="BioCyc" id="PHAL326442:PSHA_RS10005-MONOMER"/>
<dbReference type="Proteomes" id="UP000006843">
    <property type="component" value="Chromosome I"/>
</dbReference>
<dbReference type="GO" id="GO:0005737">
    <property type="term" value="C:cytoplasm"/>
    <property type="evidence" value="ECO:0007669"/>
    <property type="project" value="UniProtKB-SubCell"/>
</dbReference>
<dbReference type="GO" id="GO:0016020">
    <property type="term" value="C:membrane"/>
    <property type="evidence" value="ECO:0007669"/>
    <property type="project" value="GOC"/>
</dbReference>
<dbReference type="GO" id="GO:0019171">
    <property type="term" value="F:(3R)-hydroxyacyl-[acyl-carrier-protein] dehydratase activity"/>
    <property type="evidence" value="ECO:0007669"/>
    <property type="project" value="UniProtKB-EC"/>
</dbReference>
<dbReference type="GO" id="GO:0006633">
    <property type="term" value="P:fatty acid biosynthetic process"/>
    <property type="evidence" value="ECO:0007669"/>
    <property type="project" value="UniProtKB-UniRule"/>
</dbReference>
<dbReference type="GO" id="GO:0009245">
    <property type="term" value="P:lipid A biosynthetic process"/>
    <property type="evidence" value="ECO:0007669"/>
    <property type="project" value="UniProtKB-UniRule"/>
</dbReference>
<dbReference type="CDD" id="cd01288">
    <property type="entry name" value="FabZ"/>
    <property type="match status" value="1"/>
</dbReference>
<dbReference type="FunFam" id="3.10.129.10:FF:000001">
    <property type="entry name" value="3-hydroxyacyl-[acyl-carrier-protein] dehydratase FabZ"/>
    <property type="match status" value="1"/>
</dbReference>
<dbReference type="Gene3D" id="3.10.129.10">
    <property type="entry name" value="Hotdog Thioesterase"/>
    <property type="match status" value="1"/>
</dbReference>
<dbReference type="HAMAP" id="MF_00406">
    <property type="entry name" value="FabZ"/>
    <property type="match status" value="1"/>
</dbReference>
<dbReference type="InterPro" id="IPR013114">
    <property type="entry name" value="FabA_FabZ"/>
</dbReference>
<dbReference type="InterPro" id="IPR010084">
    <property type="entry name" value="FabZ"/>
</dbReference>
<dbReference type="InterPro" id="IPR029069">
    <property type="entry name" value="HotDog_dom_sf"/>
</dbReference>
<dbReference type="NCBIfam" id="TIGR01750">
    <property type="entry name" value="fabZ"/>
    <property type="match status" value="1"/>
</dbReference>
<dbReference type="NCBIfam" id="NF000582">
    <property type="entry name" value="PRK00006.1"/>
    <property type="match status" value="1"/>
</dbReference>
<dbReference type="PANTHER" id="PTHR30272">
    <property type="entry name" value="3-HYDROXYACYL-[ACYL-CARRIER-PROTEIN] DEHYDRATASE"/>
    <property type="match status" value="1"/>
</dbReference>
<dbReference type="PANTHER" id="PTHR30272:SF1">
    <property type="entry name" value="3-HYDROXYACYL-[ACYL-CARRIER-PROTEIN] DEHYDRATASE"/>
    <property type="match status" value="1"/>
</dbReference>
<dbReference type="Pfam" id="PF07977">
    <property type="entry name" value="FabA"/>
    <property type="match status" value="1"/>
</dbReference>
<dbReference type="SUPFAM" id="SSF54637">
    <property type="entry name" value="Thioesterase/thiol ester dehydrase-isomerase"/>
    <property type="match status" value="1"/>
</dbReference>
<sequence length="150" mass="17004">MANELNSLDIQEILSLLPHRYPMLLVDRVIDFTPGKSLHAIKNVTINEPIFTGHFPNQPIFPGVLILEAMAQATGLLGFKTVENRSENELYLFAAVDNARFKKPVLPGDTMHLHVEFLKERRNLWKFAAEAKVDGKLVCSAEIMCARREF</sequence>
<proteinExistence type="inferred from homology"/>
<comment type="function">
    <text evidence="1">Involved in unsaturated fatty acids biosynthesis. Catalyzes the dehydration of short chain beta-hydroxyacyl-ACPs and long chain saturated and unsaturated beta-hydroxyacyl-ACPs.</text>
</comment>
<comment type="catalytic activity">
    <reaction evidence="1">
        <text>a (3R)-hydroxyacyl-[ACP] = a (2E)-enoyl-[ACP] + H2O</text>
        <dbReference type="Rhea" id="RHEA:13097"/>
        <dbReference type="Rhea" id="RHEA-COMP:9925"/>
        <dbReference type="Rhea" id="RHEA-COMP:9945"/>
        <dbReference type="ChEBI" id="CHEBI:15377"/>
        <dbReference type="ChEBI" id="CHEBI:78784"/>
        <dbReference type="ChEBI" id="CHEBI:78827"/>
        <dbReference type="EC" id="4.2.1.59"/>
    </reaction>
</comment>
<comment type="subcellular location">
    <subcellularLocation>
        <location evidence="1">Cytoplasm</location>
    </subcellularLocation>
</comment>
<comment type="similarity">
    <text evidence="1">Belongs to the thioester dehydratase family. FabZ subfamily.</text>
</comment>
<reference key="1">
    <citation type="journal article" date="2005" name="Genome Res.">
        <title>Coping with cold: the genome of the versatile marine Antarctica bacterium Pseudoalteromonas haloplanktis TAC125.</title>
        <authorList>
            <person name="Medigue C."/>
            <person name="Krin E."/>
            <person name="Pascal G."/>
            <person name="Barbe V."/>
            <person name="Bernsel A."/>
            <person name="Bertin P.N."/>
            <person name="Cheung F."/>
            <person name="Cruveiller S."/>
            <person name="D'Amico S."/>
            <person name="Duilio A."/>
            <person name="Fang G."/>
            <person name="Feller G."/>
            <person name="Ho C."/>
            <person name="Mangenot S."/>
            <person name="Marino G."/>
            <person name="Nilsson J."/>
            <person name="Parrilli E."/>
            <person name="Rocha E.P.C."/>
            <person name="Rouy Z."/>
            <person name="Sekowska A."/>
            <person name="Tutino M.L."/>
            <person name="Vallenet D."/>
            <person name="von Heijne G."/>
            <person name="Danchin A."/>
        </authorList>
    </citation>
    <scope>NUCLEOTIDE SEQUENCE [LARGE SCALE GENOMIC DNA]</scope>
    <source>
        <strain>TAC 125</strain>
    </source>
</reference>
<protein>
    <recommendedName>
        <fullName evidence="1">3-hydroxyacyl-[acyl-carrier-protein] dehydratase FabZ</fullName>
        <ecNumber evidence="1">4.2.1.59</ecNumber>
    </recommendedName>
    <alternativeName>
        <fullName evidence="1">(3R)-hydroxymyristoyl-[acyl-carrier-protein] dehydratase</fullName>
        <shortName evidence="1">(3R)-hydroxymyristoyl-ACP dehydrase</shortName>
    </alternativeName>
    <alternativeName>
        <fullName evidence="1">Beta-hydroxyacyl-ACP dehydratase</fullName>
    </alternativeName>
</protein>
<evidence type="ECO:0000255" key="1">
    <source>
        <dbReference type="HAMAP-Rule" id="MF_00406"/>
    </source>
</evidence>
<gene>
    <name evidence="1" type="primary">fabZ</name>
    <name type="ordered locus">PSHAa2025</name>
</gene>
<feature type="chain" id="PRO_0000230824" description="3-hydroxyacyl-[acyl-carrier-protein] dehydratase FabZ">
    <location>
        <begin position="1"/>
        <end position="150"/>
    </location>
</feature>
<feature type="active site" evidence="1">
    <location>
        <position position="54"/>
    </location>
</feature>
<accession>Q3IIY5</accession>
<keyword id="KW-0963">Cytoplasm</keyword>
<keyword id="KW-0441">Lipid A biosynthesis</keyword>
<keyword id="KW-0444">Lipid biosynthesis</keyword>
<keyword id="KW-0443">Lipid metabolism</keyword>
<keyword id="KW-0456">Lyase</keyword>
<keyword id="KW-1185">Reference proteome</keyword>